<comment type="function">
    <text evidence="1">Cell wall formation.</text>
</comment>
<comment type="catalytic activity">
    <reaction evidence="1">
        <text>UDP-N-acetyl-alpha-D-muramate + L-alanine + ATP = UDP-N-acetyl-alpha-D-muramoyl-L-alanine + ADP + phosphate + H(+)</text>
        <dbReference type="Rhea" id="RHEA:23372"/>
        <dbReference type="ChEBI" id="CHEBI:15378"/>
        <dbReference type="ChEBI" id="CHEBI:30616"/>
        <dbReference type="ChEBI" id="CHEBI:43474"/>
        <dbReference type="ChEBI" id="CHEBI:57972"/>
        <dbReference type="ChEBI" id="CHEBI:70757"/>
        <dbReference type="ChEBI" id="CHEBI:83898"/>
        <dbReference type="ChEBI" id="CHEBI:456216"/>
        <dbReference type="EC" id="6.3.2.8"/>
    </reaction>
</comment>
<comment type="pathway">
    <text evidence="1">Cell wall biogenesis; peptidoglycan biosynthesis.</text>
</comment>
<comment type="subcellular location">
    <subcellularLocation>
        <location evidence="1">Cytoplasm</location>
    </subcellularLocation>
</comment>
<comment type="similarity">
    <text evidence="1">Belongs to the MurCDEF family.</text>
</comment>
<proteinExistence type="inferred from homology"/>
<protein>
    <recommendedName>
        <fullName evidence="1">UDP-N-acetylmuramate--L-alanine ligase</fullName>
        <ecNumber evidence="1">6.3.2.8</ecNumber>
    </recommendedName>
    <alternativeName>
        <fullName evidence="1">UDP-N-acetylmuramoyl-L-alanine synthetase</fullName>
    </alternativeName>
</protein>
<keyword id="KW-0067">ATP-binding</keyword>
<keyword id="KW-0131">Cell cycle</keyword>
<keyword id="KW-0132">Cell division</keyword>
<keyword id="KW-0133">Cell shape</keyword>
<keyword id="KW-0961">Cell wall biogenesis/degradation</keyword>
<keyword id="KW-0963">Cytoplasm</keyword>
<keyword id="KW-0436">Ligase</keyword>
<keyword id="KW-0547">Nucleotide-binding</keyword>
<keyword id="KW-0573">Peptidoglycan synthesis</keyword>
<keyword id="KW-1185">Reference proteome</keyword>
<reference key="1">
    <citation type="journal article" date="2004" name="Nucleic Acids Res.">
        <title>Genome sequence of Symbiobacterium thermophilum, an uncultivable bacterium that depends on microbial commensalism.</title>
        <authorList>
            <person name="Ueda K."/>
            <person name="Yamashita A."/>
            <person name="Ishikawa J."/>
            <person name="Shimada M."/>
            <person name="Watsuji T."/>
            <person name="Morimura K."/>
            <person name="Ikeda H."/>
            <person name="Hattori M."/>
            <person name="Beppu T."/>
        </authorList>
    </citation>
    <scope>NUCLEOTIDE SEQUENCE [LARGE SCALE GENOMIC DNA]</scope>
    <source>
        <strain>DSM 24528 / JCM 14929 / IAM 14863 / T</strain>
    </source>
</reference>
<name>MURC_SYMTH</name>
<evidence type="ECO:0000255" key="1">
    <source>
        <dbReference type="HAMAP-Rule" id="MF_00046"/>
    </source>
</evidence>
<feature type="chain" id="PRO_0000182172" description="UDP-N-acetylmuramate--L-alanine ligase">
    <location>
        <begin position="1"/>
        <end position="482"/>
    </location>
</feature>
<feature type="binding site" evidence="1">
    <location>
        <begin position="111"/>
        <end position="117"/>
    </location>
    <ligand>
        <name>ATP</name>
        <dbReference type="ChEBI" id="CHEBI:30616"/>
    </ligand>
</feature>
<gene>
    <name evidence="1" type="primary">murC</name>
    <name type="ordered locus">STH2918</name>
</gene>
<accession>Q67K97</accession>
<dbReference type="EC" id="6.3.2.8" evidence="1"/>
<dbReference type="EMBL" id="AP006840">
    <property type="protein sequence ID" value="BAD41901.1"/>
    <property type="molecule type" value="Genomic_DNA"/>
</dbReference>
<dbReference type="RefSeq" id="WP_011197035.1">
    <property type="nucleotide sequence ID" value="NC_006177.1"/>
</dbReference>
<dbReference type="SMR" id="Q67K97"/>
<dbReference type="STRING" id="292459.STH2918"/>
<dbReference type="KEGG" id="sth:STH2918"/>
<dbReference type="eggNOG" id="COG0773">
    <property type="taxonomic scope" value="Bacteria"/>
</dbReference>
<dbReference type="HOGENOM" id="CLU_028104_2_2_9"/>
<dbReference type="OrthoDB" id="9804126at2"/>
<dbReference type="UniPathway" id="UPA00219"/>
<dbReference type="Proteomes" id="UP000000417">
    <property type="component" value="Chromosome"/>
</dbReference>
<dbReference type="GO" id="GO:0005737">
    <property type="term" value="C:cytoplasm"/>
    <property type="evidence" value="ECO:0007669"/>
    <property type="project" value="UniProtKB-SubCell"/>
</dbReference>
<dbReference type="GO" id="GO:0005524">
    <property type="term" value="F:ATP binding"/>
    <property type="evidence" value="ECO:0007669"/>
    <property type="project" value="UniProtKB-UniRule"/>
</dbReference>
<dbReference type="GO" id="GO:0008763">
    <property type="term" value="F:UDP-N-acetylmuramate-L-alanine ligase activity"/>
    <property type="evidence" value="ECO:0007669"/>
    <property type="project" value="UniProtKB-UniRule"/>
</dbReference>
<dbReference type="GO" id="GO:0051301">
    <property type="term" value="P:cell division"/>
    <property type="evidence" value="ECO:0007669"/>
    <property type="project" value="UniProtKB-KW"/>
</dbReference>
<dbReference type="GO" id="GO:0071555">
    <property type="term" value="P:cell wall organization"/>
    <property type="evidence" value="ECO:0007669"/>
    <property type="project" value="UniProtKB-KW"/>
</dbReference>
<dbReference type="GO" id="GO:0009252">
    <property type="term" value="P:peptidoglycan biosynthetic process"/>
    <property type="evidence" value="ECO:0007669"/>
    <property type="project" value="UniProtKB-UniRule"/>
</dbReference>
<dbReference type="GO" id="GO:0008360">
    <property type="term" value="P:regulation of cell shape"/>
    <property type="evidence" value="ECO:0007669"/>
    <property type="project" value="UniProtKB-KW"/>
</dbReference>
<dbReference type="Gene3D" id="3.90.190.20">
    <property type="entry name" value="Mur ligase, C-terminal domain"/>
    <property type="match status" value="1"/>
</dbReference>
<dbReference type="Gene3D" id="3.40.1190.10">
    <property type="entry name" value="Mur-like, catalytic domain"/>
    <property type="match status" value="1"/>
</dbReference>
<dbReference type="Gene3D" id="3.40.50.720">
    <property type="entry name" value="NAD(P)-binding Rossmann-like Domain"/>
    <property type="match status" value="1"/>
</dbReference>
<dbReference type="HAMAP" id="MF_00046">
    <property type="entry name" value="MurC"/>
    <property type="match status" value="1"/>
</dbReference>
<dbReference type="InterPro" id="IPR036565">
    <property type="entry name" value="Mur-like_cat_sf"/>
</dbReference>
<dbReference type="InterPro" id="IPR004101">
    <property type="entry name" value="Mur_ligase_C"/>
</dbReference>
<dbReference type="InterPro" id="IPR036615">
    <property type="entry name" value="Mur_ligase_C_dom_sf"/>
</dbReference>
<dbReference type="InterPro" id="IPR013221">
    <property type="entry name" value="Mur_ligase_cen"/>
</dbReference>
<dbReference type="InterPro" id="IPR000713">
    <property type="entry name" value="Mur_ligase_N"/>
</dbReference>
<dbReference type="InterPro" id="IPR050061">
    <property type="entry name" value="MurCDEF_pg_biosynth"/>
</dbReference>
<dbReference type="InterPro" id="IPR005758">
    <property type="entry name" value="UDP-N-AcMur_Ala_ligase_MurC"/>
</dbReference>
<dbReference type="NCBIfam" id="TIGR01082">
    <property type="entry name" value="murC"/>
    <property type="match status" value="1"/>
</dbReference>
<dbReference type="PANTHER" id="PTHR43445:SF3">
    <property type="entry name" value="UDP-N-ACETYLMURAMATE--L-ALANINE LIGASE"/>
    <property type="match status" value="1"/>
</dbReference>
<dbReference type="PANTHER" id="PTHR43445">
    <property type="entry name" value="UDP-N-ACETYLMURAMATE--L-ALANINE LIGASE-RELATED"/>
    <property type="match status" value="1"/>
</dbReference>
<dbReference type="Pfam" id="PF01225">
    <property type="entry name" value="Mur_ligase"/>
    <property type="match status" value="1"/>
</dbReference>
<dbReference type="Pfam" id="PF02875">
    <property type="entry name" value="Mur_ligase_C"/>
    <property type="match status" value="1"/>
</dbReference>
<dbReference type="Pfam" id="PF08245">
    <property type="entry name" value="Mur_ligase_M"/>
    <property type="match status" value="1"/>
</dbReference>
<dbReference type="SUPFAM" id="SSF51984">
    <property type="entry name" value="MurCD N-terminal domain"/>
    <property type="match status" value="1"/>
</dbReference>
<dbReference type="SUPFAM" id="SSF53623">
    <property type="entry name" value="MurD-like peptide ligases, catalytic domain"/>
    <property type="match status" value="1"/>
</dbReference>
<dbReference type="SUPFAM" id="SSF53244">
    <property type="entry name" value="MurD-like peptide ligases, peptide-binding domain"/>
    <property type="match status" value="1"/>
</dbReference>
<sequence length="482" mass="52227">MLKARKVHFIGVGGYGMSALAMVLKQRGTAVSGSDVAASARTQRLAEAGVEVHIGAHDAAHIEGADVVVYSTQVPEDNPELAAARARGLRVLHRSELLAEFLNGRSIAVAGTHGKTTTSSMVACLLEKAGLDPTILLGGDLEVIGGTGKAGRGDWVVAEADESDRSFLRYHPRVAVVTNVEPEHLEFWEGSFARIQEGFRQFLRQVQPGGLAALCADDPTLRSIGQELRNQPGVVHVVFYGTHPEAEWRAENIRPWEKGIVYDCVRDGRLLGEVRLPIPGRHNALNSLGALVAGDYAGLSFRQMQETLLSFGNARRRFEVWADVDGIRVVDDYAHHPTEIRATLAAAREQAGRRVVAVFQPQRYSRTHWLMDEFATAFQDADVLVLTRIYSPPGERPIPGVSAEALARRIQANTGRPVAVISDQEEILRFLLAEVRPGDTVITMGAGDIWKVARALAQALQSRAVTRTASSGSGRPAPGSGR</sequence>
<organism>
    <name type="scientific">Symbiobacterium thermophilum (strain DSM 24528 / JCM 14929 / IAM 14863 / T)</name>
    <dbReference type="NCBI Taxonomy" id="292459"/>
    <lineage>
        <taxon>Bacteria</taxon>
        <taxon>Bacillati</taxon>
        <taxon>Bacillota</taxon>
        <taxon>Clostridia</taxon>
        <taxon>Eubacteriales</taxon>
        <taxon>Symbiobacteriaceae</taxon>
        <taxon>Symbiobacterium</taxon>
    </lineage>
</organism>